<comment type="function">
    <text evidence="2 3">Involved in the biosynthesis of ketocarotenoids which are powerful anti-oxidative molecules (PubMed:21398427, PubMed:22526507). Catalyzes the conversion of zeaxanthin to astaxanthin via adonixanthin (PubMed:21398427, PubMed:22526507). Catalyzes the conversion of beta-carotene to canthaxanthin via echinenone (PubMed:21398427, PubMed:22526507).</text>
</comment>
<comment type="catalytic activity">
    <reaction evidence="2 3">
        <text>all-trans-adonixanthin + 2 AH2 + 2 O2 = all-trans-(3S,3'S)-astaxanthin + 2 A + 3 H2O</text>
        <dbReference type="Rhea" id="RHEA:56772"/>
        <dbReference type="ChEBI" id="CHEBI:13193"/>
        <dbReference type="ChEBI" id="CHEBI:15377"/>
        <dbReference type="ChEBI" id="CHEBI:15379"/>
        <dbReference type="ChEBI" id="CHEBI:17499"/>
        <dbReference type="ChEBI" id="CHEBI:40968"/>
        <dbReference type="ChEBI" id="CHEBI:80217"/>
        <dbReference type="EC" id="1.14.99.64"/>
    </reaction>
    <physiologicalReaction direction="left-to-right" evidence="2 3">
        <dbReference type="Rhea" id="RHEA:56773"/>
    </physiologicalReaction>
</comment>
<comment type="catalytic activity">
    <reaction evidence="2 3">
        <text>all-trans-zeaxanthin + 2 AH2 + 2 O2 = all-trans-adonixanthin + 2 A + 3 H2O</text>
        <dbReference type="Rhea" id="RHEA:56768"/>
        <dbReference type="ChEBI" id="CHEBI:13193"/>
        <dbReference type="ChEBI" id="CHEBI:15377"/>
        <dbReference type="ChEBI" id="CHEBI:15379"/>
        <dbReference type="ChEBI" id="CHEBI:17499"/>
        <dbReference type="ChEBI" id="CHEBI:27547"/>
        <dbReference type="ChEBI" id="CHEBI:80217"/>
        <dbReference type="EC" id="1.14.99.64"/>
    </reaction>
    <physiologicalReaction direction="left-to-right" evidence="2 3">
        <dbReference type="Rhea" id="RHEA:56769"/>
    </physiologicalReaction>
</comment>
<comment type="catalytic activity">
    <reaction evidence="2 3">
        <text>echinenone + 2 AH2 + 2 O2 = canthaxanthin + 2 A + 3 H2O</text>
        <dbReference type="Rhea" id="RHEA:55664"/>
        <dbReference type="ChEBI" id="CHEBI:3362"/>
        <dbReference type="ChEBI" id="CHEBI:4746"/>
        <dbReference type="ChEBI" id="CHEBI:13193"/>
        <dbReference type="ChEBI" id="CHEBI:15377"/>
        <dbReference type="ChEBI" id="CHEBI:15379"/>
        <dbReference type="ChEBI" id="CHEBI:17499"/>
        <dbReference type="EC" id="1.14.99.63"/>
    </reaction>
    <physiologicalReaction direction="left-to-right" evidence="2 3">
        <dbReference type="Rhea" id="RHEA:55665"/>
    </physiologicalReaction>
</comment>
<comment type="catalytic activity">
    <reaction evidence="2 3">
        <text>all-trans-beta-carotene + 2 AH2 + 2 O2 = echinenone + 2 A + 3 H2O</text>
        <dbReference type="Rhea" id="RHEA:55660"/>
        <dbReference type="ChEBI" id="CHEBI:4746"/>
        <dbReference type="ChEBI" id="CHEBI:13193"/>
        <dbReference type="ChEBI" id="CHEBI:15377"/>
        <dbReference type="ChEBI" id="CHEBI:15379"/>
        <dbReference type="ChEBI" id="CHEBI:17499"/>
        <dbReference type="ChEBI" id="CHEBI:17579"/>
        <dbReference type="EC" id="1.14.99.63"/>
    </reaction>
    <physiologicalReaction direction="left-to-right" evidence="2 3">
        <dbReference type="Rhea" id="RHEA:55661"/>
    </physiologicalReaction>
</comment>
<comment type="pathway">
    <text evidence="6">Carotenoid biosynthesis; astaxanthin biosynthesis.</text>
</comment>
<organism>
    <name type="scientific">Chlamydomonas reinhardtii</name>
    <name type="common">Chlamydomonas smithii</name>
    <dbReference type="NCBI Taxonomy" id="3055"/>
    <lineage>
        <taxon>Eukaryota</taxon>
        <taxon>Viridiplantae</taxon>
        <taxon>Chlorophyta</taxon>
        <taxon>core chlorophytes</taxon>
        <taxon>Chlorophyceae</taxon>
        <taxon>CS clade</taxon>
        <taxon>Chlamydomonadales</taxon>
        <taxon>Chlamydomonadaceae</taxon>
        <taxon>Chlamydomonas</taxon>
    </lineage>
</organism>
<accession>Q4VKB4</accession>
<sequence>MGPGIQPTSARPCSRTKHSRFALLAAALTARRVKQFTKQFRSRRMAEDILKLWQRQYHLPREDSDKRTLRERVHLYRPPRSDLGGIAVAVTVIALWATLFVYGLWFVKLPWALKVGETATSWATIAAVFFSLEFLYTGLFITTHDAMHGTIALRNRRLNDFLGQLAISLYAWFDYSVLHRKHWEHHNHTGEPRVDPDFHRGNPNLAVWFAQFMVSYMTLSQFLKIAVWSNLLLLAGAPLANQLLFMTAAPILSAFRLFYYGTYVPHHPEKGHTGAMPWQVSRTSSASRLQSFLTCYHFDLHWEHHRWPYAPWWELPKCRQIARGAALAPGPLPVPAAAAATAATAAAAAAATGSPAPASRAGSASSASAAASGFGSGHSGSVAAQPLSSLPLLSEGVKGLVEGAMELVAGGSSSGGGGEGGKPGAGEHGLLQRQRQLAPVGVMA</sequence>
<dbReference type="EC" id="1.14.99.64" evidence="2 3"/>
<dbReference type="EC" id="1.14.99.63" evidence="2 3"/>
<dbReference type="EMBL" id="AY860820">
    <property type="protein sequence ID" value="AAX54908.1"/>
    <property type="molecule type" value="mRNA"/>
</dbReference>
<dbReference type="EMBL" id="DS496147">
    <property type="protein sequence ID" value="EDO99381.1"/>
    <property type="molecule type" value="Genomic_DNA"/>
</dbReference>
<dbReference type="RefSeq" id="XP_001698699.1">
    <property type="nucleotide sequence ID" value="XM_001698647.1"/>
</dbReference>
<dbReference type="GeneID" id="5724273"/>
<dbReference type="KEGG" id="cre:CHLRE_04g215000v5"/>
<dbReference type="HOGENOM" id="CLU_617317_0_0_1"/>
<dbReference type="OrthoDB" id="9980984at2759"/>
<dbReference type="BioCyc" id="MetaCyc:MONOMER-17803"/>
<dbReference type="BRENDA" id="1.14.99.63">
    <property type="organism ID" value="1318"/>
</dbReference>
<dbReference type="BRENDA" id="1.14.99.64">
    <property type="organism ID" value="1318"/>
</dbReference>
<dbReference type="UniPathway" id="UPA00387"/>
<dbReference type="ExpressionAtlas" id="Q4VKB4">
    <property type="expression patterns" value="baseline and differential"/>
</dbReference>
<dbReference type="GO" id="GO:0016705">
    <property type="term" value="F:oxidoreductase activity, acting on paired donors, with incorporation or reduction of molecular oxygen"/>
    <property type="evidence" value="ECO:0000314"/>
    <property type="project" value="UniProtKB"/>
</dbReference>
<dbReference type="GO" id="GO:0016117">
    <property type="term" value="P:carotenoid biosynthetic process"/>
    <property type="evidence" value="ECO:0000314"/>
    <property type="project" value="UniProtKB"/>
</dbReference>
<dbReference type="InterPro" id="IPR005804">
    <property type="entry name" value="FA_desaturase_dom"/>
</dbReference>
<dbReference type="InterPro" id="IPR012171">
    <property type="entry name" value="Fatty_acid_desaturase"/>
</dbReference>
<dbReference type="PANTHER" id="PTHR19353:SF19">
    <property type="entry name" value="DELTA(5) FATTY ACID DESATURASE C-RELATED"/>
    <property type="match status" value="1"/>
</dbReference>
<dbReference type="PANTHER" id="PTHR19353">
    <property type="entry name" value="FATTY ACID DESATURASE 2"/>
    <property type="match status" value="1"/>
</dbReference>
<dbReference type="Pfam" id="PF00487">
    <property type="entry name" value="FA_desaturase"/>
    <property type="match status" value="1"/>
</dbReference>
<proteinExistence type="evidence at protein level"/>
<gene>
    <name evidence="4" type="primary">BKT</name>
    <name evidence="7" type="synonym">CBK1</name>
    <name evidence="7" type="ORF">CHLREDRAFT_185186</name>
</gene>
<evidence type="ECO:0000256" key="1">
    <source>
        <dbReference type="SAM" id="MobiDB-lite"/>
    </source>
</evidence>
<evidence type="ECO:0000269" key="2">
    <source>
    </source>
</evidence>
<evidence type="ECO:0000269" key="3">
    <source>
    </source>
</evidence>
<evidence type="ECO:0000303" key="4">
    <source>
    </source>
</evidence>
<evidence type="ECO:0000303" key="5">
    <source>
    </source>
</evidence>
<evidence type="ECO:0000305" key="6"/>
<evidence type="ECO:0000312" key="7">
    <source>
        <dbReference type="EMBL" id="EDO99381.1"/>
    </source>
</evidence>
<protein>
    <recommendedName>
        <fullName evidence="5">Zeaxanthin 4-ketolase</fullName>
        <ecNumber evidence="2 3">1.14.99.64</ecNumber>
    </recommendedName>
    <alternativeName>
        <fullName evidence="4">Beta-carotene 4-ketolase</fullName>
        <shortName evidence="5">CrBKT</shortName>
        <ecNumber evidence="2 3">1.14.99.63</ecNumber>
    </alternativeName>
</protein>
<feature type="chain" id="PRO_0000452211" description="Zeaxanthin 4-ketolase">
    <location>
        <begin position="1"/>
        <end position="444"/>
    </location>
</feature>
<feature type="region of interest" description="Disordered" evidence="1">
    <location>
        <begin position="408"/>
        <end position="444"/>
    </location>
</feature>
<feature type="compositionally biased region" description="Gly residues" evidence="1">
    <location>
        <begin position="412"/>
        <end position="427"/>
    </location>
</feature>
<reference key="1">
    <citation type="journal article" date="2005" name="Plant Physiol.">
        <title>Genome-based examination of chlorophyll and carotenoid biosynthesis in Chlamydomonas reinhardtii.</title>
        <authorList>
            <person name="Lohr M."/>
            <person name="Im C.-S."/>
            <person name="Grossman A.R."/>
        </authorList>
    </citation>
    <scope>NUCLEOTIDE SEQUENCE [MRNA]</scope>
    <source>
        <strain>21gr / CC-1690</strain>
    </source>
</reference>
<reference key="2">
    <citation type="journal article" date="2007" name="Science">
        <title>The Chlamydomonas genome reveals the evolution of key animal and plant functions.</title>
        <authorList>
            <person name="Merchant S.S."/>
            <person name="Prochnik S.E."/>
            <person name="Vallon O."/>
            <person name="Harris E.H."/>
            <person name="Karpowicz S.J."/>
            <person name="Witman G.B."/>
            <person name="Terry A."/>
            <person name="Salamov A."/>
            <person name="Fritz-Laylin L.K."/>
            <person name="Marechal-Drouard L."/>
            <person name="Marshall W.F."/>
            <person name="Qu L.H."/>
            <person name="Nelson D.R."/>
            <person name="Sanderfoot A.A."/>
            <person name="Spalding M.H."/>
            <person name="Kapitonov V.V."/>
            <person name="Ren Q."/>
            <person name="Ferris P."/>
            <person name="Lindquist E."/>
            <person name="Shapiro H."/>
            <person name="Lucas S.M."/>
            <person name="Grimwood J."/>
            <person name="Schmutz J."/>
            <person name="Cardol P."/>
            <person name="Cerutti H."/>
            <person name="Chanfreau G."/>
            <person name="Chen C.L."/>
            <person name="Cognat V."/>
            <person name="Croft M.T."/>
            <person name="Dent R."/>
            <person name="Dutcher S."/>
            <person name="Fernandez E."/>
            <person name="Fukuzawa H."/>
            <person name="Gonzalez-Ballester D."/>
            <person name="Gonzalez-Halphen D."/>
            <person name="Hallmann A."/>
            <person name="Hanikenne M."/>
            <person name="Hippler M."/>
            <person name="Inwood W."/>
            <person name="Jabbari K."/>
            <person name="Kalanon M."/>
            <person name="Kuras R."/>
            <person name="Lefebvre P.A."/>
            <person name="Lemaire S.D."/>
            <person name="Lobanov A.V."/>
            <person name="Lohr M."/>
            <person name="Manuell A."/>
            <person name="Meier I."/>
            <person name="Mets L."/>
            <person name="Mittag M."/>
            <person name="Mittelmeier T."/>
            <person name="Moroney J.V."/>
            <person name="Moseley J."/>
            <person name="Napoli C."/>
            <person name="Nedelcu A.M."/>
            <person name="Niyogi K."/>
            <person name="Novoselov S.V."/>
            <person name="Paulsen I.T."/>
            <person name="Pazour G.J."/>
            <person name="Purton S."/>
            <person name="Ral J.P."/>
            <person name="Riano-Pachon D.M."/>
            <person name="Riekhof W."/>
            <person name="Rymarquis L."/>
            <person name="Schroda M."/>
            <person name="Stern D."/>
            <person name="Umen J."/>
            <person name="Willows R."/>
            <person name="Wilson N."/>
            <person name="Zimmer S.L."/>
            <person name="Allmer J."/>
            <person name="Balk J."/>
            <person name="Bisova K."/>
            <person name="Chen C.J."/>
            <person name="Elias M."/>
            <person name="Gendler K."/>
            <person name="Hauser C."/>
            <person name="Lamb M.R."/>
            <person name="Ledford H."/>
            <person name="Long J.C."/>
            <person name="Minagawa J."/>
            <person name="Page M.D."/>
            <person name="Pan J."/>
            <person name="Pootakham W."/>
            <person name="Roje S."/>
            <person name="Rose A."/>
            <person name="Stahlberg E."/>
            <person name="Terauchi A.M."/>
            <person name="Yang P."/>
            <person name="Ball S."/>
            <person name="Bowler C."/>
            <person name="Dieckmann C.L."/>
            <person name="Gladyshev V.N."/>
            <person name="Green P."/>
            <person name="Jorgensen R."/>
            <person name="Mayfield S."/>
            <person name="Mueller-Roeber B."/>
            <person name="Rajamani S."/>
            <person name="Sayre R.T."/>
            <person name="Brokstein P."/>
            <person name="Dubchak I."/>
            <person name="Goodstein D."/>
            <person name="Hornick L."/>
            <person name="Huang Y.W."/>
            <person name="Jhaveri J."/>
            <person name="Luo Y."/>
            <person name="Martinez D."/>
            <person name="Ngau W.C."/>
            <person name="Otillar B."/>
            <person name="Poliakov A."/>
            <person name="Porter A."/>
            <person name="Szajkowski L."/>
            <person name="Werner G."/>
            <person name="Zhou K."/>
            <person name="Grigoriev I.V."/>
            <person name="Rokhsar D.S."/>
            <person name="Grossman A.R."/>
        </authorList>
    </citation>
    <scope>NUCLEOTIDE SEQUENCE [LARGE SCALE GENOMIC DNA]</scope>
    <source>
        <strain>CC-503</strain>
    </source>
</reference>
<reference key="3">
    <citation type="journal article" date="2011" name="J. Exp. Bot.">
        <title>Functional characterization of various algal carotenoid ketolases reveals that ketolating zeaxanthin efficiently is essential for high production of astaxanthin in transgenic Arabidopsis.</title>
        <authorList>
            <person name="Zhong Y.J."/>
            <person name="Huang J.C."/>
            <person name="Liu J."/>
            <person name="Li Y."/>
            <person name="Jiang Y."/>
            <person name="Xu Z.F."/>
            <person name="Sandmann G."/>
            <person name="Chen F."/>
        </authorList>
    </citation>
    <scope>FUNCTION</scope>
    <scope>CATALYTIC ACTIVITY</scope>
</reference>
<reference key="4">
    <citation type="journal article" date="2012" name="Planta">
        <title>Cloning and selection of carotenoid ketolase genes for the engineering of high-yield astaxanthin in plants.</title>
        <authorList>
            <person name="Huang J."/>
            <person name="Zhong Y."/>
            <person name="Sandmann G."/>
            <person name="Liu J."/>
            <person name="Chen F."/>
        </authorList>
    </citation>
    <scope>FUNCTION</scope>
    <scope>CATALYTIC ACTIVITY</scope>
</reference>
<name>BKT_CHLRE</name>
<keyword id="KW-0125">Carotenoid biosynthesis</keyword>
<keyword id="KW-0560">Oxidoreductase</keyword>